<comment type="function">
    <text evidence="1">F(1)F(0) ATP synthase produces ATP from ADP in the presence of a proton or sodium gradient. F-type ATPases consist of two structural domains, F(1) containing the extramembraneous catalytic core and F(0) containing the membrane proton channel, linked together by a central stalk and a peripheral stalk. During catalysis, ATP synthesis in the catalytic domain of F(1) is coupled via a rotary mechanism of the central stalk subunits to proton translocation.</text>
</comment>
<comment type="function">
    <text evidence="1">Key component of the F(0) channel; it plays a direct role in translocation across the membrane. A homomeric c-ring of between 10-14 subunits forms the central stalk rotor element with the F(1) delta and epsilon subunits.</text>
</comment>
<comment type="subunit">
    <text evidence="1">F-type ATPases have 2 components, F(1) - the catalytic core - and F(0) - the membrane proton channel. F(1) has five subunits: alpha(3), beta(3), gamma(1), delta(1), epsilon(1). F(0) has three main subunits: a(1), b(2) and c(10-14). The alpha and beta chains form an alternating ring which encloses part of the gamma chain. F(1) is attached to F(0) by a central stalk formed by the gamma and epsilon chains, while a peripheral stalk is formed by the delta and b chains.</text>
</comment>
<comment type="subcellular location">
    <subcellularLocation>
        <location evidence="1">Cell inner membrane</location>
        <topology evidence="1">Multi-pass membrane protein</topology>
    </subcellularLocation>
</comment>
<comment type="similarity">
    <text evidence="1">Belongs to the ATPase C chain family.</text>
</comment>
<organism>
    <name type="scientific">Sulfurovum sp. (strain NBC37-1)</name>
    <dbReference type="NCBI Taxonomy" id="387093"/>
    <lineage>
        <taxon>Bacteria</taxon>
        <taxon>Pseudomonadati</taxon>
        <taxon>Campylobacterota</taxon>
        <taxon>Epsilonproteobacteria</taxon>
        <taxon>Campylobacterales</taxon>
        <taxon>Sulfurovaceae</taxon>
        <taxon>Sulfurovum</taxon>
    </lineage>
</organism>
<name>ATPL_SULNB</name>
<sequence length="101" mass="10121">MKKFFLLFLALGAVAFAGEGESMIKAYSVVAAGVGLGLAALGGAVGMGHTAAATIAGTARNPGLGGKLMTTMFIALAMIEAQVIYTLVIALIALYANPFIG</sequence>
<reference key="1">
    <citation type="journal article" date="2007" name="Proc. Natl. Acad. Sci. U.S.A.">
        <title>Deep-sea vent epsilon-proteobacterial genomes provide insights into emergence of pathogens.</title>
        <authorList>
            <person name="Nakagawa S."/>
            <person name="Takaki Y."/>
            <person name="Shimamura S."/>
            <person name="Reysenbach A.-L."/>
            <person name="Takai K."/>
            <person name="Horikoshi K."/>
        </authorList>
    </citation>
    <scope>NUCLEOTIDE SEQUENCE [LARGE SCALE GENOMIC DNA]</scope>
    <source>
        <strain>NBC37-1</strain>
    </source>
</reference>
<feature type="chain" id="PRO_0000365926" description="ATP synthase subunit c">
    <location>
        <begin position="1"/>
        <end position="101"/>
    </location>
</feature>
<feature type="transmembrane region" description="Helical" evidence="1">
    <location>
        <begin position="28"/>
        <end position="48"/>
    </location>
</feature>
<feature type="transmembrane region" description="Helical" evidence="1">
    <location>
        <begin position="72"/>
        <end position="92"/>
    </location>
</feature>
<feature type="site" description="Reversibly protonated during proton transport" evidence="1">
    <location>
        <position position="80"/>
    </location>
</feature>
<keyword id="KW-0066">ATP synthesis</keyword>
<keyword id="KW-0997">Cell inner membrane</keyword>
<keyword id="KW-1003">Cell membrane</keyword>
<keyword id="KW-0138">CF(0)</keyword>
<keyword id="KW-0375">Hydrogen ion transport</keyword>
<keyword id="KW-0406">Ion transport</keyword>
<keyword id="KW-0446">Lipid-binding</keyword>
<keyword id="KW-0472">Membrane</keyword>
<keyword id="KW-0812">Transmembrane</keyword>
<keyword id="KW-1133">Transmembrane helix</keyword>
<keyword id="KW-0813">Transport</keyword>
<gene>
    <name evidence="1" type="primary">atpE</name>
    <name type="ordered locus">SUN_1883</name>
</gene>
<evidence type="ECO:0000255" key="1">
    <source>
        <dbReference type="HAMAP-Rule" id="MF_01396"/>
    </source>
</evidence>
<dbReference type="EMBL" id="AP009179">
    <property type="protein sequence ID" value="BAF72830.1"/>
    <property type="molecule type" value="Genomic_DNA"/>
</dbReference>
<dbReference type="RefSeq" id="WP_012083643.1">
    <property type="nucleotide sequence ID" value="NC_009663.1"/>
</dbReference>
<dbReference type="SMR" id="A6QBH1"/>
<dbReference type="STRING" id="387093.SUN_1883"/>
<dbReference type="KEGG" id="sun:SUN_1883"/>
<dbReference type="eggNOG" id="COG0636">
    <property type="taxonomic scope" value="Bacteria"/>
</dbReference>
<dbReference type="HOGENOM" id="CLU_148047_0_1_7"/>
<dbReference type="OrthoDB" id="5339943at2"/>
<dbReference type="Proteomes" id="UP000006378">
    <property type="component" value="Chromosome"/>
</dbReference>
<dbReference type="GO" id="GO:0005886">
    <property type="term" value="C:plasma membrane"/>
    <property type="evidence" value="ECO:0007669"/>
    <property type="project" value="UniProtKB-SubCell"/>
</dbReference>
<dbReference type="GO" id="GO:0045259">
    <property type="term" value="C:proton-transporting ATP synthase complex"/>
    <property type="evidence" value="ECO:0007669"/>
    <property type="project" value="UniProtKB-KW"/>
</dbReference>
<dbReference type="GO" id="GO:0033177">
    <property type="term" value="C:proton-transporting two-sector ATPase complex, proton-transporting domain"/>
    <property type="evidence" value="ECO:0007669"/>
    <property type="project" value="InterPro"/>
</dbReference>
<dbReference type="GO" id="GO:0008289">
    <property type="term" value="F:lipid binding"/>
    <property type="evidence" value="ECO:0007669"/>
    <property type="project" value="UniProtKB-KW"/>
</dbReference>
<dbReference type="GO" id="GO:0046933">
    <property type="term" value="F:proton-transporting ATP synthase activity, rotational mechanism"/>
    <property type="evidence" value="ECO:0007669"/>
    <property type="project" value="UniProtKB-UniRule"/>
</dbReference>
<dbReference type="CDD" id="cd18121">
    <property type="entry name" value="ATP-synt_Fo_c"/>
    <property type="match status" value="1"/>
</dbReference>
<dbReference type="FunFam" id="1.20.20.10:FF:000002">
    <property type="entry name" value="ATP synthase subunit c"/>
    <property type="match status" value="1"/>
</dbReference>
<dbReference type="Gene3D" id="1.20.20.10">
    <property type="entry name" value="F1F0 ATP synthase subunit C"/>
    <property type="match status" value="1"/>
</dbReference>
<dbReference type="HAMAP" id="MF_01396">
    <property type="entry name" value="ATP_synth_c_bact"/>
    <property type="match status" value="1"/>
</dbReference>
<dbReference type="InterPro" id="IPR005953">
    <property type="entry name" value="ATP_synth_csu_bac/chlpt"/>
</dbReference>
<dbReference type="InterPro" id="IPR000454">
    <property type="entry name" value="ATP_synth_F0_csu"/>
</dbReference>
<dbReference type="InterPro" id="IPR020537">
    <property type="entry name" value="ATP_synth_F0_csu_DDCD_BS"/>
</dbReference>
<dbReference type="InterPro" id="IPR038662">
    <property type="entry name" value="ATP_synth_F0_csu_sf"/>
</dbReference>
<dbReference type="InterPro" id="IPR002379">
    <property type="entry name" value="ATPase_proteolipid_c-like_dom"/>
</dbReference>
<dbReference type="InterPro" id="IPR035921">
    <property type="entry name" value="F/V-ATP_Csub_sf"/>
</dbReference>
<dbReference type="NCBIfam" id="TIGR01260">
    <property type="entry name" value="ATP_synt_c"/>
    <property type="match status" value="1"/>
</dbReference>
<dbReference type="NCBIfam" id="NF006295">
    <property type="entry name" value="PRK08482.1"/>
    <property type="match status" value="1"/>
</dbReference>
<dbReference type="Pfam" id="PF00137">
    <property type="entry name" value="ATP-synt_C"/>
    <property type="match status" value="1"/>
</dbReference>
<dbReference type="PRINTS" id="PR00124">
    <property type="entry name" value="ATPASEC"/>
</dbReference>
<dbReference type="SUPFAM" id="SSF81333">
    <property type="entry name" value="F1F0 ATP synthase subunit C"/>
    <property type="match status" value="1"/>
</dbReference>
<dbReference type="PROSITE" id="PS00605">
    <property type="entry name" value="ATPASE_C"/>
    <property type="match status" value="1"/>
</dbReference>
<protein>
    <recommendedName>
        <fullName evidence="1">ATP synthase subunit c</fullName>
    </recommendedName>
    <alternativeName>
        <fullName evidence="1">ATP synthase F(0) sector subunit c</fullName>
    </alternativeName>
    <alternativeName>
        <fullName evidence="1">F-type ATPase subunit c</fullName>
        <shortName evidence="1">F-ATPase subunit c</shortName>
    </alternativeName>
    <alternativeName>
        <fullName evidence="1">Lipid-binding protein</fullName>
    </alternativeName>
</protein>
<proteinExistence type="inferred from homology"/>
<accession>A6QBH1</accession>